<name>RABC_DICDI</name>
<feature type="chain" id="PRO_0000121270" description="Ras-related protein RabC">
    <location>
        <begin position="1"/>
        <end position="196"/>
    </location>
</feature>
<feature type="short sequence motif" description="Effector region" evidence="1">
    <location>
        <begin position="35"/>
        <end position="43"/>
    </location>
</feature>
<feature type="binding site" evidence="1">
    <location>
        <begin position="13"/>
        <end position="20"/>
    </location>
    <ligand>
        <name>GTP</name>
        <dbReference type="ChEBI" id="CHEBI:37565"/>
    </ligand>
</feature>
<feature type="binding site" evidence="1">
    <location>
        <begin position="63"/>
        <end position="67"/>
    </location>
    <ligand>
        <name>GTP</name>
        <dbReference type="ChEBI" id="CHEBI:37565"/>
    </ligand>
</feature>
<feature type="binding site" evidence="1">
    <location>
        <begin position="121"/>
        <end position="124"/>
    </location>
    <ligand>
        <name>GTP</name>
        <dbReference type="ChEBI" id="CHEBI:37565"/>
    </ligand>
</feature>
<feature type="lipid moiety-binding region" description="S-geranylgeranyl cysteine" evidence="1">
    <location>
        <position position="195"/>
    </location>
</feature>
<feature type="lipid moiety-binding region" description="S-geranylgeranyl cysteine" evidence="1">
    <location>
        <position position="196"/>
    </location>
</feature>
<feature type="sequence conflict" description="In Ref. 1; AAC37384." evidence="2" ref="1">
    <original>C</original>
    <variation>L</variation>
    <location>
        <position position="99"/>
    </location>
</feature>
<feature type="sequence conflict" description="In Ref. 1; AAC37384." evidence="2" ref="1">
    <original>K</original>
    <variation>E</variation>
    <location>
        <position position="192"/>
    </location>
</feature>
<protein>
    <recommendedName>
        <fullName>Ras-related protein RabC</fullName>
    </recommendedName>
</protein>
<dbReference type="EMBL" id="L21013">
    <property type="protein sequence ID" value="AAC37384.1"/>
    <property type="molecule type" value="mRNA"/>
</dbReference>
<dbReference type="EMBL" id="AAFI02000006">
    <property type="protein sequence ID" value="EAL71558.1"/>
    <property type="molecule type" value="Genomic_DNA"/>
</dbReference>
<dbReference type="RefSeq" id="XP_645455.1">
    <property type="nucleotide sequence ID" value="XM_640363.1"/>
</dbReference>
<dbReference type="SMR" id="P34143"/>
<dbReference type="FunCoup" id="P34143">
    <property type="interactions" value="7"/>
</dbReference>
<dbReference type="STRING" id="44689.P34143"/>
<dbReference type="PaxDb" id="44689-DDB0185061"/>
<dbReference type="EnsemblProtists" id="EAL71558">
    <property type="protein sequence ID" value="EAL71558"/>
    <property type="gene ID" value="DDB_G0271736"/>
</dbReference>
<dbReference type="GeneID" id="8618083"/>
<dbReference type="KEGG" id="ddi:DDB_G0271736"/>
<dbReference type="dictyBase" id="DDB_G0271736">
    <property type="gene designation" value="rabC"/>
</dbReference>
<dbReference type="VEuPathDB" id="AmoebaDB:DDB_G0271736"/>
<dbReference type="eggNOG" id="KOG0084">
    <property type="taxonomic scope" value="Eukaryota"/>
</dbReference>
<dbReference type="HOGENOM" id="CLU_041217_23_1_1"/>
<dbReference type="InParanoid" id="P34143"/>
<dbReference type="OMA" id="MEGDINL"/>
<dbReference type="PhylomeDB" id="P34143"/>
<dbReference type="PRO" id="PR:P34143"/>
<dbReference type="Proteomes" id="UP000002195">
    <property type="component" value="Chromosome 2"/>
</dbReference>
<dbReference type="GO" id="GO:0012505">
    <property type="term" value="C:endomembrane system"/>
    <property type="evidence" value="ECO:0000318"/>
    <property type="project" value="GO_Central"/>
</dbReference>
<dbReference type="GO" id="GO:0005811">
    <property type="term" value="C:lipid droplet"/>
    <property type="evidence" value="ECO:0007005"/>
    <property type="project" value="dictyBase"/>
</dbReference>
<dbReference type="GO" id="GO:0140220">
    <property type="term" value="C:pathogen-containing vacuole"/>
    <property type="evidence" value="ECO:0007005"/>
    <property type="project" value="dictyBase"/>
</dbReference>
<dbReference type="GO" id="GO:0005886">
    <property type="term" value="C:plasma membrane"/>
    <property type="evidence" value="ECO:0007669"/>
    <property type="project" value="UniProtKB-SubCell"/>
</dbReference>
<dbReference type="GO" id="GO:0005525">
    <property type="term" value="F:GTP binding"/>
    <property type="evidence" value="ECO:0007669"/>
    <property type="project" value="UniProtKB-KW"/>
</dbReference>
<dbReference type="GO" id="GO:0003924">
    <property type="term" value="F:GTPase activity"/>
    <property type="evidence" value="ECO:0000318"/>
    <property type="project" value="GO_Central"/>
</dbReference>
<dbReference type="GO" id="GO:0006886">
    <property type="term" value="P:intracellular protein transport"/>
    <property type="evidence" value="ECO:0000318"/>
    <property type="project" value="GO_Central"/>
</dbReference>
<dbReference type="CDD" id="cd00154">
    <property type="entry name" value="Rab"/>
    <property type="match status" value="1"/>
</dbReference>
<dbReference type="FunFam" id="3.40.50.300:FF:002076">
    <property type="entry name" value="Ras-related protein rab-5"/>
    <property type="match status" value="1"/>
</dbReference>
<dbReference type="Gene3D" id="3.40.50.300">
    <property type="entry name" value="P-loop containing nucleotide triphosphate hydrolases"/>
    <property type="match status" value="1"/>
</dbReference>
<dbReference type="InterPro" id="IPR027417">
    <property type="entry name" value="P-loop_NTPase"/>
</dbReference>
<dbReference type="InterPro" id="IPR050227">
    <property type="entry name" value="Rab"/>
</dbReference>
<dbReference type="InterPro" id="IPR005225">
    <property type="entry name" value="Small_GTP-bd"/>
</dbReference>
<dbReference type="InterPro" id="IPR001806">
    <property type="entry name" value="Small_GTPase"/>
</dbReference>
<dbReference type="NCBIfam" id="TIGR00231">
    <property type="entry name" value="small_GTP"/>
    <property type="match status" value="1"/>
</dbReference>
<dbReference type="PANTHER" id="PTHR47977">
    <property type="entry name" value="RAS-RELATED PROTEIN RAB"/>
    <property type="match status" value="1"/>
</dbReference>
<dbReference type="Pfam" id="PF00071">
    <property type="entry name" value="Ras"/>
    <property type="match status" value="1"/>
</dbReference>
<dbReference type="PRINTS" id="PR00449">
    <property type="entry name" value="RASTRNSFRMNG"/>
</dbReference>
<dbReference type="SMART" id="SM00175">
    <property type="entry name" value="RAB"/>
    <property type="match status" value="1"/>
</dbReference>
<dbReference type="SMART" id="SM00176">
    <property type="entry name" value="RAN"/>
    <property type="match status" value="1"/>
</dbReference>
<dbReference type="SMART" id="SM00173">
    <property type="entry name" value="RAS"/>
    <property type="match status" value="1"/>
</dbReference>
<dbReference type="SMART" id="SM00174">
    <property type="entry name" value="RHO"/>
    <property type="match status" value="1"/>
</dbReference>
<dbReference type="SUPFAM" id="SSF52540">
    <property type="entry name" value="P-loop containing nucleoside triphosphate hydrolases"/>
    <property type="match status" value="1"/>
</dbReference>
<dbReference type="PROSITE" id="PS51419">
    <property type="entry name" value="RAB"/>
    <property type="match status" value="1"/>
</dbReference>
<accession>P34143</accession>
<accession>Q55AR7</accession>
<accession>Q8MMW5</accession>
<gene>
    <name type="primary">rabC</name>
    <name type="ORF">DDB_G0271736</name>
</gene>
<reference key="1">
    <citation type="journal article" date="1993" name="Gene">
        <title>Cloning and characterization of five novel Dictyostelium discoideum rab-related genes.</title>
        <authorList>
            <person name="Bush J.M. IV"/>
            <person name="Franek K."/>
            <person name="Daniel J.M."/>
            <person name="Spiegelman G.B."/>
            <person name="Weeks G."/>
            <person name="Cardelli J.A."/>
        </authorList>
    </citation>
    <scope>NUCLEOTIDE SEQUENCE [MRNA]</scope>
    <source>
        <strain>AX3</strain>
    </source>
</reference>
<reference key="2">
    <citation type="journal article" date="2002" name="Nature">
        <title>Sequence and analysis of chromosome 2 of Dictyostelium discoideum.</title>
        <authorList>
            <person name="Gloeckner G."/>
            <person name="Eichinger L."/>
            <person name="Szafranski K."/>
            <person name="Pachebat J.A."/>
            <person name="Bankier A.T."/>
            <person name="Dear P.H."/>
            <person name="Lehmann R."/>
            <person name="Baumgart C."/>
            <person name="Parra G."/>
            <person name="Abril J.F."/>
            <person name="Guigo R."/>
            <person name="Kumpf K."/>
            <person name="Tunggal B."/>
            <person name="Cox E.C."/>
            <person name="Quail M.A."/>
            <person name="Platzer M."/>
            <person name="Rosenthal A."/>
            <person name="Noegel A.A."/>
        </authorList>
    </citation>
    <scope>NUCLEOTIDE SEQUENCE [LARGE SCALE GENOMIC DNA]</scope>
    <source>
        <strain>AX4</strain>
    </source>
</reference>
<reference key="3">
    <citation type="journal article" date="2005" name="Nature">
        <title>The genome of the social amoeba Dictyostelium discoideum.</title>
        <authorList>
            <person name="Eichinger L."/>
            <person name="Pachebat J.A."/>
            <person name="Gloeckner G."/>
            <person name="Rajandream M.A."/>
            <person name="Sucgang R."/>
            <person name="Berriman M."/>
            <person name="Song J."/>
            <person name="Olsen R."/>
            <person name="Szafranski K."/>
            <person name="Xu Q."/>
            <person name="Tunggal B."/>
            <person name="Kummerfeld S."/>
            <person name="Madera M."/>
            <person name="Konfortov B.A."/>
            <person name="Rivero F."/>
            <person name="Bankier A.T."/>
            <person name="Lehmann R."/>
            <person name="Hamlin N."/>
            <person name="Davies R."/>
            <person name="Gaudet P."/>
            <person name="Fey P."/>
            <person name="Pilcher K."/>
            <person name="Chen G."/>
            <person name="Saunders D."/>
            <person name="Sodergren E.J."/>
            <person name="Davis P."/>
            <person name="Kerhornou A."/>
            <person name="Nie X."/>
            <person name="Hall N."/>
            <person name="Anjard C."/>
            <person name="Hemphill L."/>
            <person name="Bason N."/>
            <person name="Farbrother P."/>
            <person name="Desany B."/>
            <person name="Just E."/>
            <person name="Morio T."/>
            <person name="Rost R."/>
            <person name="Churcher C.M."/>
            <person name="Cooper J."/>
            <person name="Haydock S."/>
            <person name="van Driessche N."/>
            <person name="Cronin A."/>
            <person name="Goodhead I."/>
            <person name="Muzny D.M."/>
            <person name="Mourier T."/>
            <person name="Pain A."/>
            <person name="Lu M."/>
            <person name="Harper D."/>
            <person name="Lindsay R."/>
            <person name="Hauser H."/>
            <person name="James K.D."/>
            <person name="Quiles M."/>
            <person name="Madan Babu M."/>
            <person name="Saito T."/>
            <person name="Buchrieser C."/>
            <person name="Wardroper A."/>
            <person name="Felder M."/>
            <person name="Thangavelu M."/>
            <person name="Johnson D."/>
            <person name="Knights A."/>
            <person name="Loulseged H."/>
            <person name="Mungall K.L."/>
            <person name="Oliver K."/>
            <person name="Price C."/>
            <person name="Quail M.A."/>
            <person name="Urushihara H."/>
            <person name="Hernandez J."/>
            <person name="Rabbinowitsch E."/>
            <person name="Steffen D."/>
            <person name="Sanders M."/>
            <person name="Ma J."/>
            <person name="Kohara Y."/>
            <person name="Sharp S."/>
            <person name="Simmonds M.N."/>
            <person name="Spiegler S."/>
            <person name="Tivey A."/>
            <person name="Sugano S."/>
            <person name="White B."/>
            <person name="Walker D."/>
            <person name="Woodward J.R."/>
            <person name="Winckler T."/>
            <person name="Tanaka Y."/>
            <person name="Shaulsky G."/>
            <person name="Schleicher M."/>
            <person name="Weinstock G.M."/>
            <person name="Rosenthal A."/>
            <person name="Cox E.C."/>
            <person name="Chisholm R.L."/>
            <person name="Gibbs R.A."/>
            <person name="Loomis W.F."/>
            <person name="Platzer M."/>
            <person name="Kay R.R."/>
            <person name="Williams J.G."/>
            <person name="Dear P.H."/>
            <person name="Noegel A.A."/>
            <person name="Barrell B.G."/>
            <person name="Kuspa A."/>
        </authorList>
    </citation>
    <scope>NUCLEOTIDE SEQUENCE [LARGE SCALE GENOMIC DNA]</scope>
    <source>
        <strain>AX4</strain>
    </source>
</reference>
<sequence>MEEEILYKIILVGESGVGKSSILVRFTDNTFSQHFAPTLGVDFNVKTIRNKETGQTVKLQLWDTAGQERFKSITQTFYRGSHGVIVVYDVTDPKSFERCKNWVEDINQYTQDGMIIILVGNKSDMVAQRKVTFEQGQEMAEQLKTKFLEVSAKENNGVTQVFDLLVQDIEATMKNSKVAQNQLNLNSEVGQKRGCC</sequence>
<keyword id="KW-1003">Cell membrane</keyword>
<keyword id="KW-0342">GTP-binding</keyword>
<keyword id="KW-0449">Lipoprotein</keyword>
<keyword id="KW-0472">Membrane</keyword>
<keyword id="KW-0547">Nucleotide-binding</keyword>
<keyword id="KW-0636">Prenylation</keyword>
<keyword id="KW-1185">Reference proteome</keyword>
<comment type="subcellular location">
    <subcellularLocation>
        <location evidence="2">Cell membrane</location>
        <topology evidence="2">Lipid-anchor</topology>
        <orientation evidence="2">Cytoplasmic side</orientation>
    </subcellularLocation>
</comment>
<comment type="similarity">
    <text evidence="2">Belongs to the small GTPase superfamily. Rab family.</text>
</comment>
<evidence type="ECO:0000250" key="1"/>
<evidence type="ECO:0000305" key="2"/>
<proteinExistence type="evidence at transcript level"/>
<organism>
    <name type="scientific">Dictyostelium discoideum</name>
    <name type="common">Social amoeba</name>
    <dbReference type="NCBI Taxonomy" id="44689"/>
    <lineage>
        <taxon>Eukaryota</taxon>
        <taxon>Amoebozoa</taxon>
        <taxon>Evosea</taxon>
        <taxon>Eumycetozoa</taxon>
        <taxon>Dictyostelia</taxon>
        <taxon>Dictyosteliales</taxon>
        <taxon>Dictyosteliaceae</taxon>
        <taxon>Dictyostelium</taxon>
    </lineage>
</organism>